<sequence length="1776" mass="190701">MHSVSPSTYPSGGTSPAPADTPGTEYSEYEFSNDVAVVGMACRVAGGNHNPELLWQSLLSQKSAVGEIPEMRWEPYYRRDPRNAKELKKTTSRGYFLDRLEDFDCQFFGISPKEAEQMDPQQRVSLEVASEALEDAGIPAKSLSGSDTAVFWGVNSDDYSKLVLEDLPNVEAWMGIGTAYCGVPNRISYHLNLMGPSTAVDAACASSLVAVHHGVQAIRLGESQVAIVGGVNALCGPGLTRVLDKAGAISSDGSCKSFDDDAHGYARGEGAGALVLKSLHRALLDHDNVLAVIKGSAVAQDGKTNGIMAPNAKAQQLAARTALNVAGVDPSTVRYVEAHATSTPLGDPTEISAIAGVYGTNRPADDPCYIGSIKPNIGHLEAGAGVMGFIKAILTIQKGVLPPQANLTNLNSRIDWKTAGVKVVQEATPWPSSDPIRRAGVCSYGYGGTVSHAVIEEFNPILRPDPLDDGAATGPGLLLLSGPQEKRLALQAKTLREWMTADGKDNNLSEILTTLATRRDHHDYRAALVVDDHLDATQVLQALANGTDHSFTTQSRVLGADVSKDVVWVFSGHGAQWPDMGKQLIHNPVFFAAIQPLDELIQAEIGLSPIELLRTGDFESSDRVQILTYLMQIGLSAILQSNGITPQAVIGHSVGEIAASVVAGALTSAEGALIVTRRALLYRQVMGKGGMILVNLPSAETEEILGRRQDLVVAIDSSPSSCVVAGDKDIVAETAEAFKARGVKTFTVKSDIAFHSPTLNVLMDPLRDALGQALAPTVHIKLYSTALVDPRGQDVRDLEYWTGNMVNRVRLTSAIQAAVEDGYRLFLEVSTHPVVSHSINETLMDAGLEDFAVIPTLLRKKPTEKHILHSIAQLHCRGAEVNWAAQMPGRWATGLPTTTWMHKPIWRKIETAPLHTGLTHDVEKHTLLGQRIPVPGTDTFVYTSRLDNETKPFPGSHPLHGTEIVPAAGLINTFLKGTGGQMLQNVVLRVPVAINAPRSVQVVVQQDQVKVVSRLISSDPSLSDDDASWVTHTTAYWDRKVLGSADRIDLAAVKARLTTKLADNFSIDYLDKVGVSAMGFPWAVTEHYRDTKQMLARVDVNPAVLGDDPLPWDSSSWAPVLDAATSVGSTVFQTAALRMPAQIERVEIFTSEDPPKISYLFVEEASDSVPTSHVSVLSETGEVLAKFTAMRFSEIEGTPGVSGSMESLVHQIAWPPATPAEEPLLITKVILVSPDATARAQYAATLPTQVQSFQFSTTEDFFSNASSLPLEKGTVVAYIPGEVASLAEVPAASESFTWNLLELIKFIVNGSLPIKVFTLTSSVGDGQTPTALAQSPLIGLARIIASEHPDLGSLIDIEEPKIPLSTMRYIQGADVIRISDGIARVSRFRSLPRTKLRPASEGPRLLPRPDGTYLITGGLGILGLEVADFLVEKGARRLLLISRRALPPRRTWDQVSEDLQPTIAKIRLLESRGASVHVLPLDITKPDAVEQLSTALDRLSLPAVQGVVHAAGVLDNEMVLQTTRDAFNRVLAPKIAGALALHEVFPPKSVDFFVMFSSCGNLVGFTGQASYGSGNAFLDTLATHRARLGDSGAVAFQWTAWRGLGMGSSTDFINAELEAKGITDVTRDEAFAAWQHLAKYDIDHGVVLRSLAIDDGEPVPVPILNDIVVRRVSELSGSAQAAAGSSGNDAVPSSGPELKAYLDEKIRGCVAKVLQMTAEDVDSKAALADLGVDSVMTVTLRRQLQQTLKIPVPPTLTWSHPTVSHLVVWFAEKIGK</sequence>
<gene>
    <name evidence="16" type="primary">patK</name>
    <name type="ORF">PEX2_082880</name>
</gene>
<keyword id="KW-0963">Cytoplasm</keyword>
<keyword id="KW-0511">Multifunctional enzyme</keyword>
<keyword id="KW-0521">NADP</keyword>
<keyword id="KW-0596">Phosphopantetheine</keyword>
<keyword id="KW-0597">Phosphoprotein</keyword>
<keyword id="KW-1185">Reference proteome</keyword>
<keyword id="KW-0808">Transferase</keyword>
<dbReference type="EC" id="2.3.1.165" evidence="14"/>
<dbReference type="EMBL" id="KF899892">
    <property type="protein sequence ID" value="AIG62146.1"/>
    <property type="molecule type" value="Genomic_DNA"/>
</dbReference>
<dbReference type="EMBL" id="JQFZ01000262">
    <property type="protein sequence ID" value="KGO52641.1"/>
    <property type="status" value="ALT_SEQ"/>
    <property type="molecule type" value="Genomic_DNA"/>
</dbReference>
<dbReference type="RefSeq" id="XP_016595371.1">
    <property type="nucleotide sequence ID" value="XM_016745558.1"/>
</dbReference>
<dbReference type="SMR" id="A0A075TRC0"/>
<dbReference type="STRING" id="27334.A0A075TRC0"/>
<dbReference type="GeneID" id="27680978"/>
<dbReference type="VEuPathDB" id="FungiDB:PEXP_094460"/>
<dbReference type="HOGENOM" id="CLU_000022_35_3_1"/>
<dbReference type="OrthoDB" id="329835at2759"/>
<dbReference type="UniPathway" id="UPA00918"/>
<dbReference type="PHI-base" id="PHI:3299"/>
<dbReference type="PHI-base" id="PHI:4505"/>
<dbReference type="Proteomes" id="UP000030143">
    <property type="component" value="Unassembled WGS sequence"/>
</dbReference>
<dbReference type="GO" id="GO:0005829">
    <property type="term" value="C:cytosol"/>
    <property type="evidence" value="ECO:0000314"/>
    <property type="project" value="GO_Central"/>
</dbReference>
<dbReference type="GO" id="GO:0004315">
    <property type="term" value="F:3-oxoacyl-[acyl-carrier-protein] synthase activity"/>
    <property type="evidence" value="ECO:0007669"/>
    <property type="project" value="InterPro"/>
</dbReference>
<dbReference type="GO" id="GO:0050641">
    <property type="term" value="F:6-methylsalicylic acid synthase activity"/>
    <property type="evidence" value="ECO:0000314"/>
    <property type="project" value="GO_Central"/>
</dbReference>
<dbReference type="GO" id="GO:0004312">
    <property type="term" value="F:fatty acid synthase activity"/>
    <property type="evidence" value="ECO:0007669"/>
    <property type="project" value="TreeGrafter"/>
</dbReference>
<dbReference type="GO" id="GO:0031177">
    <property type="term" value="F:phosphopantetheine binding"/>
    <property type="evidence" value="ECO:0007669"/>
    <property type="project" value="InterPro"/>
</dbReference>
<dbReference type="GO" id="GO:0016218">
    <property type="term" value="F:polyketide synthase activity"/>
    <property type="evidence" value="ECO:0000314"/>
    <property type="project" value="UniProt"/>
</dbReference>
<dbReference type="GO" id="GO:0006633">
    <property type="term" value="P:fatty acid biosynthetic process"/>
    <property type="evidence" value="ECO:0007669"/>
    <property type="project" value="InterPro"/>
</dbReference>
<dbReference type="GO" id="GO:0140723">
    <property type="term" value="P:patulin biosynthetic process"/>
    <property type="evidence" value="ECO:0000314"/>
    <property type="project" value="GO_Central"/>
</dbReference>
<dbReference type="CDD" id="cd05274">
    <property type="entry name" value="KR_FAS_SDR_x"/>
    <property type="match status" value="1"/>
</dbReference>
<dbReference type="CDD" id="cd00833">
    <property type="entry name" value="PKS"/>
    <property type="match status" value="1"/>
</dbReference>
<dbReference type="Gene3D" id="3.30.70.3290">
    <property type="match status" value="1"/>
</dbReference>
<dbReference type="Gene3D" id="3.40.47.10">
    <property type="match status" value="1"/>
</dbReference>
<dbReference type="Gene3D" id="1.10.1200.10">
    <property type="entry name" value="ACP-like"/>
    <property type="match status" value="1"/>
</dbReference>
<dbReference type="Gene3D" id="3.40.366.10">
    <property type="entry name" value="Malonyl-Coenzyme A Acyl Carrier Protein, domain 2"/>
    <property type="match status" value="1"/>
</dbReference>
<dbReference type="Gene3D" id="3.40.50.720">
    <property type="entry name" value="NAD(P)-binding Rossmann-like Domain"/>
    <property type="match status" value="1"/>
</dbReference>
<dbReference type="Gene3D" id="3.10.129.110">
    <property type="entry name" value="Polyketide synthase dehydratase"/>
    <property type="match status" value="1"/>
</dbReference>
<dbReference type="InterPro" id="IPR001227">
    <property type="entry name" value="Ac_transferase_dom_sf"/>
</dbReference>
<dbReference type="InterPro" id="IPR036736">
    <property type="entry name" value="ACP-like_sf"/>
</dbReference>
<dbReference type="InterPro" id="IPR014043">
    <property type="entry name" value="Acyl_transferase_dom"/>
</dbReference>
<dbReference type="InterPro" id="IPR016035">
    <property type="entry name" value="Acyl_Trfase/lysoPLipase"/>
</dbReference>
<dbReference type="InterPro" id="IPR018201">
    <property type="entry name" value="Ketoacyl_synth_AS"/>
</dbReference>
<dbReference type="InterPro" id="IPR014031">
    <property type="entry name" value="Ketoacyl_synth_C"/>
</dbReference>
<dbReference type="InterPro" id="IPR014030">
    <property type="entry name" value="Ketoacyl_synth_N"/>
</dbReference>
<dbReference type="InterPro" id="IPR016036">
    <property type="entry name" value="Malonyl_transacylase_ACP-bd"/>
</dbReference>
<dbReference type="InterPro" id="IPR036291">
    <property type="entry name" value="NAD(P)-bd_dom_sf"/>
</dbReference>
<dbReference type="InterPro" id="IPR032821">
    <property type="entry name" value="PKS_assoc"/>
</dbReference>
<dbReference type="InterPro" id="IPR020841">
    <property type="entry name" value="PKS_Beta-ketoAc_synthase_dom"/>
</dbReference>
<dbReference type="InterPro" id="IPR042104">
    <property type="entry name" value="PKS_dehydratase_sf"/>
</dbReference>
<dbReference type="InterPro" id="IPR020807">
    <property type="entry name" value="PKS_DH"/>
</dbReference>
<dbReference type="InterPro" id="IPR049552">
    <property type="entry name" value="PKS_DH_N"/>
</dbReference>
<dbReference type="InterPro" id="IPR013968">
    <property type="entry name" value="PKS_KR"/>
</dbReference>
<dbReference type="InterPro" id="IPR049900">
    <property type="entry name" value="PKS_mFAS_DH"/>
</dbReference>
<dbReference type="InterPro" id="IPR050091">
    <property type="entry name" value="PKS_NRPS_Biosynth_Enz"/>
</dbReference>
<dbReference type="InterPro" id="IPR020806">
    <property type="entry name" value="PKS_PP-bd"/>
</dbReference>
<dbReference type="InterPro" id="IPR009081">
    <property type="entry name" value="PP-bd_ACP"/>
</dbReference>
<dbReference type="InterPro" id="IPR006162">
    <property type="entry name" value="Ppantetheine_attach_site"/>
</dbReference>
<dbReference type="InterPro" id="IPR016039">
    <property type="entry name" value="Thiolase-like"/>
</dbReference>
<dbReference type="PANTHER" id="PTHR43775">
    <property type="entry name" value="FATTY ACID SYNTHASE"/>
    <property type="match status" value="1"/>
</dbReference>
<dbReference type="PANTHER" id="PTHR43775:SF22">
    <property type="entry name" value="SYNTHASE, PUTATIVE (JCVI)-RELATED"/>
    <property type="match status" value="1"/>
</dbReference>
<dbReference type="Pfam" id="PF00698">
    <property type="entry name" value="Acyl_transf_1"/>
    <property type="match status" value="1"/>
</dbReference>
<dbReference type="Pfam" id="PF16197">
    <property type="entry name" value="KAsynt_C_assoc"/>
    <property type="match status" value="1"/>
</dbReference>
<dbReference type="Pfam" id="PF00109">
    <property type="entry name" value="ketoacyl-synt"/>
    <property type="match status" value="1"/>
</dbReference>
<dbReference type="Pfam" id="PF02801">
    <property type="entry name" value="Ketoacyl-synt_C"/>
    <property type="match status" value="1"/>
</dbReference>
<dbReference type="Pfam" id="PF08659">
    <property type="entry name" value="KR"/>
    <property type="match status" value="1"/>
</dbReference>
<dbReference type="Pfam" id="PF21089">
    <property type="entry name" value="PKS_DH_N"/>
    <property type="match status" value="1"/>
</dbReference>
<dbReference type="Pfam" id="PF00550">
    <property type="entry name" value="PP-binding"/>
    <property type="match status" value="1"/>
</dbReference>
<dbReference type="SMART" id="SM00827">
    <property type="entry name" value="PKS_AT"/>
    <property type="match status" value="1"/>
</dbReference>
<dbReference type="SMART" id="SM00826">
    <property type="entry name" value="PKS_DH"/>
    <property type="match status" value="1"/>
</dbReference>
<dbReference type="SMART" id="SM00822">
    <property type="entry name" value="PKS_KR"/>
    <property type="match status" value="1"/>
</dbReference>
<dbReference type="SMART" id="SM00825">
    <property type="entry name" value="PKS_KS"/>
    <property type="match status" value="1"/>
</dbReference>
<dbReference type="SMART" id="SM00823">
    <property type="entry name" value="PKS_PP"/>
    <property type="match status" value="1"/>
</dbReference>
<dbReference type="SMART" id="SM01294">
    <property type="entry name" value="PKS_PP_betabranch"/>
    <property type="match status" value="1"/>
</dbReference>
<dbReference type="SUPFAM" id="SSF47336">
    <property type="entry name" value="ACP-like"/>
    <property type="match status" value="1"/>
</dbReference>
<dbReference type="SUPFAM" id="SSF52151">
    <property type="entry name" value="FabD/lysophospholipase-like"/>
    <property type="match status" value="1"/>
</dbReference>
<dbReference type="SUPFAM" id="SSF51735">
    <property type="entry name" value="NAD(P)-binding Rossmann-fold domains"/>
    <property type="match status" value="2"/>
</dbReference>
<dbReference type="SUPFAM" id="SSF55048">
    <property type="entry name" value="Probable ACP-binding domain of malonyl-CoA ACP transacylase"/>
    <property type="match status" value="1"/>
</dbReference>
<dbReference type="SUPFAM" id="SSF53901">
    <property type="entry name" value="Thiolase-like"/>
    <property type="match status" value="1"/>
</dbReference>
<dbReference type="PROSITE" id="PS50075">
    <property type="entry name" value="CARRIER"/>
    <property type="match status" value="1"/>
</dbReference>
<dbReference type="PROSITE" id="PS00606">
    <property type="entry name" value="KS3_1"/>
    <property type="match status" value="1"/>
</dbReference>
<dbReference type="PROSITE" id="PS52004">
    <property type="entry name" value="KS3_2"/>
    <property type="match status" value="1"/>
</dbReference>
<dbReference type="PROSITE" id="PS00012">
    <property type="entry name" value="PHOSPHOPANTETHEINE"/>
    <property type="match status" value="1"/>
</dbReference>
<dbReference type="PROSITE" id="PS52019">
    <property type="entry name" value="PKS_MFAS_DH"/>
    <property type="match status" value="1"/>
</dbReference>
<reference key="1">
    <citation type="journal article" date="2014" name="Int. J. Food Microbiol.">
        <title>Sequencing, physical organization and kinetic expression of the patulin biosynthetic gene cluster from Penicillium expansum.</title>
        <authorList>
            <person name="Tannous J."/>
            <person name="El Khoury R."/>
            <person name="Snini S.P."/>
            <person name="Lippi Y."/>
            <person name="El Khoury A."/>
            <person name="Atoui A."/>
            <person name="Lteif R."/>
            <person name="Oswald I.P."/>
            <person name="Puel O."/>
        </authorList>
    </citation>
    <scope>NUCLEOTIDE SEQUENCE [GENOMIC DNA]</scope>
    <scope>IDENTIFICATION</scope>
    <scope>INDUCTION</scope>
    <source>
        <strain>NRRL 35695</strain>
    </source>
</reference>
<reference key="2">
    <citation type="journal article" date="2015" name="Mol. Plant Microbe Interact.">
        <title>Genome, transcriptome, and functional analyses of Penicillium expansum provide new insights into secondary metabolism and pathogenicity.</title>
        <authorList>
            <person name="Ballester A.R."/>
            <person name="Marcet-Houben M."/>
            <person name="Levin E."/>
            <person name="Sela N."/>
            <person name="Selma-Lazaro C."/>
            <person name="Carmona L."/>
            <person name="Wisniewski M."/>
            <person name="Droby S."/>
            <person name="Gonzalez-Candelas L."/>
            <person name="Gabaldon T."/>
        </authorList>
    </citation>
    <scope>NUCLEOTIDE SEQUENCE [LARGE SCALE GENOMIC DNA]</scope>
    <source>
        <strain>MD-8</strain>
    </source>
</reference>
<reference key="3">
    <citation type="journal article" date="2004" name="Int. J. Epidemiol.">
        <title>Clinical trial of patulin in the common cold. 1944.</title>
        <authorList>
            <consortium name="Patulin Clinical Trials Committee, Medical Research Council"/>
        </authorList>
    </citation>
    <scope>BIOTECHNOLOGY</scope>
</reference>
<reference key="4">
    <citation type="journal article" date="2012" name="Food Chem. Toxicol.">
        <title>DNA damage in organs of mice treated acutely with patulin, a known mycotoxin.</title>
        <authorList>
            <person name="de Melo F.T."/>
            <person name="de Oliveira I.M."/>
            <person name="Greggio S."/>
            <person name="Dacosta J.C."/>
            <person name="Guecheva T.N."/>
            <person name="Saffi J."/>
            <person name="Henriques J.A."/>
            <person name="Rosa R.M."/>
        </authorList>
    </citation>
    <scope>BIOTECHNOLOGY</scope>
</reference>
<reference key="5">
    <citation type="journal article" date="2016" name="Tumor Biol.">
        <title>The potential effect of patulin on mice bearing melanoma cells: an anti-tumour or carcinogenic effect?</title>
        <authorList>
            <person name="Boussabbeh M."/>
            <person name="Ben Salem I."/>
            <person name="Rjiba-Touati K."/>
            <person name="Bouyahya C."/>
            <person name="Neffati F."/>
            <person name="Najjar M.F."/>
            <person name="Bacha H."/>
            <person name="Abid-Essefi S."/>
        </authorList>
    </citation>
    <scope>BIOTECHNOLOGY</scope>
</reference>
<reference key="6">
    <citation type="journal article" date="2017" name="Mol. Plant Pathol.">
        <title>LaeA regulation of secondary metabolism modulates virulence in Penicillium expansum and is mediated by sucrose.</title>
        <authorList>
            <person name="Kumar D."/>
            <person name="Barad S."/>
            <person name="Chen Y."/>
            <person name="Luo X."/>
            <person name="Tannous J."/>
            <person name="Dubey A."/>
            <person name="Glam Matana N."/>
            <person name="Tian S."/>
            <person name="Li B."/>
            <person name="Keller N."/>
            <person name="Prusky D."/>
        </authorList>
    </citation>
    <scope>INDUCTION</scope>
</reference>
<reference key="7">
    <citation type="journal article" date="2018" name="Front. Plant Sci.">
        <title>Apple intrinsic factors modulating the global regulator, LaeA, the patulin gene cluster and patulin accumulation during fruit colonization by Penicillium expansum.</title>
        <authorList>
            <person name="Kumar D."/>
            <person name="Tannous J."/>
            <person name="Sionov E."/>
            <person name="Keller N."/>
            <person name="Prusky D."/>
        </authorList>
    </citation>
    <scope>FUNCTION</scope>
    <scope>INDUCTION</scope>
</reference>
<reference key="8">
    <citation type="journal article" date="2015" name="Mol. Plant Microbe Interact.">
        <title>Genomic characterization reveals insights into patulin biosynthesis and pathogenicity in Penicillium species.</title>
        <authorList>
            <person name="Li B."/>
            <person name="Zong Y."/>
            <person name="Du Z."/>
            <person name="Chen Y."/>
            <person name="Zhang Z."/>
            <person name="Qin G."/>
            <person name="Zhao W."/>
            <person name="Tian S."/>
        </authorList>
    </citation>
    <scope>FUNCTION</scope>
    <scope>DISRUPTION PHENOTYPE</scope>
    <scope>INDUCTION</scope>
</reference>
<reference key="9">
    <citation type="journal article" date="2019" name="Environ. Microbiol.">
        <title>Dissection of patulin biosynthesis, spatial control and regulation mechanism in Penicillium expansum.</title>
        <authorList>
            <person name="Li B."/>
            <person name="Chen Y."/>
            <person name="Zong Y."/>
            <person name="Shang Y."/>
            <person name="Zhang Z."/>
            <person name="Xu X."/>
            <person name="Wang X."/>
            <person name="Long M."/>
            <person name="Tian S."/>
        </authorList>
    </citation>
    <scope>FUNCTION</scope>
    <scope>DISRUPTION PHENOTYPE</scope>
    <scope>SUBCELLULAR LOCATION</scope>
    <scope>CATALYTIC ACTIVITY</scope>
    <scope>INDUCTION</scope>
    <scope>PATHWAY</scope>
</reference>
<reference key="10">
    <citation type="journal article" date="2022" name="Fungal Genet. Biol.">
        <title>Marker-free CRISPR-Cas9 based genetic engineering of the phytopathogenic fungus, Penicillium expansum.</title>
        <authorList>
            <person name="Clemmensen S.E."/>
            <person name="Kromphardt K.J.K."/>
            <person name="Frandsen R.J.N."/>
        </authorList>
    </citation>
    <scope>FUNCTION</scope>
    <scope>DISRUPTION PHENOTYPE</scope>
</reference>
<feature type="chain" id="PRO_0000445925" description="6-methylsalicylic acid synthase">
    <location>
        <begin position="1"/>
        <end position="1776"/>
    </location>
</feature>
<feature type="domain" description="Ketosynthase family 3 (KS3)" evidence="4">
    <location>
        <begin position="32"/>
        <end position="457"/>
    </location>
</feature>
<feature type="domain" description="PKS/mFAS DH" evidence="5">
    <location>
        <begin position="925"/>
        <end position="1201"/>
    </location>
</feature>
<feature type="domain" description="Carrier" evidence="3">
    <location>
        <begin position="1700"/>
        <end position="1774"/>
    </location>
</feature>
<feature type="region of interest" description="Disordered" evidence="6">
    <location>
        <begin position="1"/>
        <end position="26"/>
    </location>
</feature>
<feature type="region of interest" description="Malonyl-CoA:ACP transacylase (MAT) domain" evidence="2">
    <location>
        <begin position="567"/>
        <end position="880"/>
    </location>
</feature>
<feature type="region of interest" description="Dehydratase (DH) domain" evidence="2">
    <location>
        <begin position="925"/>
        <end position="1196"/>
    </location>
</feature>
<feature type="region of interest" description="N-terminal hotdog fold" evidence="5">
    <location>
        <begin position="925"/>
        <end position="1044"/>
    </location>
</feature>
<feature type="region of interest" description="C-terminal hotdog fold" evidence="5">
    <location>
        <begin position="1058"/>
        <end position="1201"/>
    </location>
</feature>
<feature type="region of interest" description="Product template (PT) domain" evidence="2">
    <location>
        <begin position="1205"/>
        <end position="1657"/>
    </location>
</feature>
<feature type="compositionally biased region" description="Low complexity" evidence="6">
    <location>
        <begin position="1"/>
        <end position="18"/>
    </location>
</feature>
<feature type="active site" description="For beta-ketoacyl synthase activity" evidence="4">
    <location>
        <position position="204"/>
    </location>
</feature>
<feature type="active site" description="For beta-ketoacyl synthase activity" evidence="4">
    <location>
        <position position="339"/>
    </location>
</feature>
<feature type="active site" description="For beta-ketoacyl synthase activity" evidence="4">
    <location>
        <position position="379"/>
    </location>
</feature>
<feature type="active site" description="Proton acceptor; for dehydratase activity" evidence="5">
    <location>
        <position position="957"/>
    </location>
</feature>
<feature type="active site" description="Proton donor; for dehydratase activity" evidence="5">
    <location>
        <position position="1113"/>
    </location>
</feature>
<feature type="modified residue" description="O-(pantetheine 4'-phosphoryl)serine" evidence="3">
    <location>
        <position position="1734"/>
    </location>
</feature>
<accession>A0A075TRC0</accession>
<accession>A0A0A2JCW7</accession>
<evidence type="ECO:0000250" key="1">
    <source>
        <dbReference type="UniProtKB" id="Q5B0D0"/>
    </source>
</evidence>
<evidence type="ECO:0000255" key="2"/>
<evidence type="ECO:0000255" key="3">
    <source>
        <dbReference type="PROSITE-ProRule" id="PRU00258"/>
    </source>
</evidence>
<evidence type="ECO:0000255" key="4">
    <source>
        <dbReference type="PROSITE-ProRule" id="PRU01348"/>
    </source>
</evidence>
<evidence type="ECO:0000255" key="5">
    <source>
        <dbReference type="PROSITE-ProRule" id="PRU01363"/>
    </source>
</evidence>
<evidence type="ECO:0000256" key="6">
    <source>
        <dbReference type="SAM" id="MobiDB-lite"/>
    </source>
</evidence>
<evidence type="ECO:0000269" key="7">
    <source>
    </source>
</evidence>
<evidence type="ECO:0000269" key="8">
    <source>
    </source>
</evidence>
<evidence type="ECO:0000269" key="9">
    <source>
    </source>
</evidence>
<evidence type="ECO:0000269" key="10">
    <source>
    </source>
</evidence>
<evidence type="ECO:0000269" key="11">
    <source>
    </source>
</evidence>
<evidence type="ECO:0000269" key="12">
    <source>
    </source>
</evidence>
<evidence type="ECO:0000269" key="13">
    <source>
    </source>
</evidence>
<evidence type="ECO:0000269" key="14">
    <source>
    </source>
</evidence>
<evidence type="ECO:0000269" key="15">
    <source>
    </source>
</evidence>
<evidence type="ECO:0000303" key="16">
    <source>
    </source>
</evidence>
<evidence type="ECO:0000305" key="17"/>
<evidence type="ECO:0000305" key="18">
    <source>
    </source>
</evidence>
<organism>
    <name type="scientific">Penicillium expansum</name>
    <name type="common">Blue mold rot fungus</name>
    <dbReference type="NCBI Taxonomy" id="27334"/>
    <lineage>
        <taxon>Eukaryota</taxon>
        <taxon>Fungi</taxon>
        <taxon>Dikarya</taxon>
        <taxon>Ascomycota</taxon>
        <taxon>Pezizomycotina</taxon>
        <taxon>Eurotiomycetes</taxon>
        <taxon>Eurotiomycetidae</taxon>
        <taxon>Eurotiales</taxon>
        <taxon>Aspergillaceae</taxon>
        <taxon>Penicillium</taxon>
    </lineage>
</organism>
<name>PATK_PENEN</name>
<proteinExistence type="evidence at protein level"/>
<protein>
    <recommendedName>
        <fullName evidence="16">6-methylsalicylic acid synthase</fullName>
        <shortName evidence="16">6MSAS</shortName>
        <ecNumber evidence="14">2.3.1.165</ecNumber>
    </recommendedName>
    <alternativeName>
        <fullName evidence="17">Non-reducing polyketide synthase patK</fullName>
    </alternativeName>
    <alternativeName>
        <fullName evidence="16">Patulin biosynthesis cluster protein K</fullName>
    </alternativeName>
</protein>
<comment type="function">
    <text evidence="10 13 14 15 18">6-methylsalicylic acid synthase; part of the gene cluster that mediates the biosynthesis of patulin, an acetate-derived tetraketide mycotoxin produced by several fungal species that shows antimicrobial properties against several bacteria (PubMed:25625822, PubMed:30100914, PubMed:30680886, PubMed:35339702). PatK catalyzes the first step of the pathway which is the synthesis of 6-methylsalicylic acid via condensation of 1 acetate and 3 malonate units (PubMed:30680886). The pathway begins with the synthesis of 6-methylsalicylic acid by the polyketide synthase (PKS) patK via condensation of acetate and malonate units. The 6-methylsalicylic acid decarboxylase patG then catalyzes the decarboxylation of 6-methylsalicylic acid to yield m-cresol (also known as 3-methylphenol). These first reactions occur in the cytosol. The intermediate m-cresol is then transported into the endoplasmic reticulum where the cytochrome P450 monooxygenase patH converts it to m-hydroxybenzyl alcohol, which is further converted to gentisyl alcohol by the cytochrome P450 monooxygenase patI. The oxidoreductases patJ and patO further convert gentisyl alcohol to isoepoxydon in the vacuole. PatN catalyzes then the transformation of isoepoxydon into phyllostine. The cluster protein patF is responsible for the conversion from phyllostine to neopatulin whereas the alcohol dehydrogenase patD converts neopatulin to E-ascladiol. The steps between isoepoxydon and E-ascladiol occur in the cytosol, and E-ascladiol is probably secreted to the extracellular space by one of the cluster-specific transporters patC or patM. Finally, the secreted patulin synthase patE catalyzes the conversion of E-ascladiol to patulin (Probable) (PubMed:30680886).</text>
</comment>
<comment type="catalytic activity">
    <reaction evidence="14">
        <text>3 malonyl-CoA + acetyl-CoA + NADPH + 3 H(+) = 6-methylsalicylate + 3 CO2 + NADP(+) + 4 CoA + H2O</text>
        <dbReference type="Rhea" id="RHEA:12240"/>
        <dbReference type="ChEBI" id="CHEBI:15377"/>
        <dbReference type="ChEBI" id="CHEBI:15378"/>
        <dbReference type="ChEBI" id="CHEBI:16526"/>
        <dbReference type="ChEBI" id="CHEBI:36658"/>
        <dbReference type="ChEBI" id="CHEBI:57287"/>
        <dbReference type="ChEBI" id="CHEBI:57288"/>
        <dbReference type="ChEBI" id="CHEBI:57384"/>
        <dbReference type="ChEBI" id="CHEBI:57783"/>
        <dbReference type="ChEBI" id="CHEBI:58349"/>
        <dbReference type="EC" id="2.3.1.165"/>
    </reaction>
</comment>
<comment type="pathway">
    <text evidence="14">Mycotoxin biosynthesis; patulin biosynthesis.</text>
</comment>
<comment type="subcellular location">
    <subcellularLocation>
        <location evidence="14">Cytoplasm</location>
        <location evidence="14">Cytosol</location>
    </subcellularLocation>
</comment>
<comment type="induction">
    <text evidence="9 10 12 13 14">Expression is correlated with the production of patulin (PubMed:25120234). Expression is positively regulated by the secondary metabolism regulator laeA (PubMed:27528575, PubMed:30100914). Expression is strongly decreased with increased sucrose concentrations. This decrease is lost in the presence of malic acid (PubMed:30100914). Expression is increased with pH changes from 2.5 to 3.5 in the presence of a limiting concentration of sucrose, 50 mM (PubMed:30100914). Natural phenols present in apple fruits such as chlorogenic acid or the flavonoid epicatechin modulate patulin biosynthesis. They increase expression in the absence of sucrose, have little impact in the presence of 15 mM sucrose, and decrease expression in 175 mM sucrose (PubMed:30100914). Expression is positively regulated by the patulin cluster-specific transcription factor patL (PubMed:25625822). Finally, expression is also positively regulated by the velvet family proteins transcription regulators veA, velB, velC, but not vosA (PubMed:30680886).</text>
</comment>
<comment type="domain">
    <text evidence="1">Multidomain protein; including a starter unit:ACP transacylase (SAT) that selects the starter unit; a ketosynthase (KS) that catalyzes repeated decarboxylative condensation to elongate the polyketide backbone; a malonyl-CoA:ACP transacylase (MAT) that selects and transfers the extender unit malonyl-CoA; a product template (PT) domain that controls the immediate cyclization regioselectivity of the reactive polyketide backbone; and an acyl-carrier protein (ACP) that serves as the tether of the growing and completed polyketide via its phosphopantetheinyl arm.</text>
</comment>
<comment type="disruption phenotype">
    <text evidence="10 14 15">Completely abolishes the production of patulin and shows significant slower colony expansion.</text>
</comment>
<comment type="biotechnology">
    <text evidence="7 8 11">Patulin was originally used as an antibiotic and specifically trialed to be used against the common cold, but it is no longer used for that purpose since it has been shown to induce immunological, neurological and gastrointestinal effects (PubMed:15082620). Genotoxic effects of patulin with dose-dependent increase in DNA strand breaks in brain, liver and kidneys have been detected in mice (PubMed:22222931). However, more recently, it has been proposed that patulin might also have anti-tumor properties (PubMed:26619846).</text>
</comment>
<comment type="sequence caution" evidence="17">
    <conflict type="erroneous gene model prediction">
        <sequence resource="EMBL-CDS" id="KGO52641"/>
    </conflict>
</comment>